<keyword id="KW-0025">Alternative splicing</keyword>
<keyword id="KW-0221">Differentiation</keyword>
<keyword id="KW-0539">Nucleus</keyword>
<keyword id="KW-1185">Reference proteome</keyword>
<keyword id="KW-0694">RNA-binding</keyword>
<keyword id="KW-0726">Sexual differentiation</keyword>
<keyword id="KW-0804">Transcription</keyword>
<keyword id="KW-0805">Transcription regulation</keyword>
<organism>
    <name type="scientific">Caenorhabditis elegans</name>
    <dbReference type="NCBI Taxonomy" id="6239"/>
    <lineage>
        <taxon>Eukaryota</taxon>
        <taxon>Metazoa</taxon>
        <taxon>Ecdysozoa</taxon>
        <taxon>Nematoda</taxon>
        <taxon>Chromadorea</taxon>
        <taxon>Rhabditida</taxon>
        <taxon>Rhabditina</taxon>
        <taxon>Rhabditomorpha</taxon>
        <taxon>Rhabditoidea</taxon>
        <taxon>Rhabditidae</taxon>
        <taxon>Peloderinae</taxon>
        <taxon>Caenorhabditis</taxon>
    </lineage>
</organism>
<gene>
    <name evidence="19" type="primary">fox-1</name>
    <name evidence="19" type="ORF">T07D1.4</name>
</gene>
<reference key="1">
    <citation type="journal article" date="1994" name="Development">
        <title>Identification of a candidate primary sex determination locus, fox-1, on the X chromosome of Caenorhabditis elegans.</title>
        <authorList>
            <person name="Hodgkin J."/>
            <person name="Zellan J.D."/>
            <person name="Albertson D.G."/>
        </authorList>
    </citation>
    <scope>NUCLEOTIDE SEQUENCE [MRNA]</scope>
    <scope>FUNCTION</scope>
    <source>
        <strain>CB1489</strain>
        <tissue>Embryo</tissue>
    </source>
</reference>
<reference key="2">
    <citation type="journal article" date="1999" name="Genetics">
        <title>Genetic and molecular analysis of fox-1, a numerator element involved in Caenorhabditis elegans primary sex determination.</title>
        <authorList>
            <person name="Skipper M."/>
            <person name="Milne C.A."/>
            <person name="Hodgkin J."/>
        </authorList>
    </citation>
    <scope>NUCLEOTIDE SEQUENCE [GENOMIC DNA]</scope>
    <scope>ALTERNATIVE SPLICING</scope>
    <scope>FUNCTION</scope>
    <scope>TISSUE SPECIFICITY</scope>
    <scope>DEVELOPMENTAL STAGE</scope>
</reference>
<reference key="3">
    <citation type="journal article" date="1998" name="Science">
        <title>Genome sequence of the nematode C. elegans: a platform for investigating biology.</title>
        <authorList>
            <consortium name="The C. elegans sequencing consortium"/>
        </authorList>
    </citation>
    <scope>NUCLEOTIDE SEQUENCE [LARGE SCALE GENOMIC DNA]</scope>
    <source>
        <strain>Bristol N2</strain>
    </source>
</reference>
<reference key="4">
    <citation type="journal article" date="1997" name="Nature">
        <title>X-chromosome-counting mechanisms that determine nematode sex.</title>
        <authorList>
            <person name="Nicoll M."/>
            <person name="Akerib C.C."/>
            <person name="Meyer B.J."/>
        </authorList>
    </citation>
    <scope>FUNCTION</scope>
    <scope>SUBCELLULAR LOCATION</scope>
    <scope>DEVELOPMENTAL STAGE</scope>
    <scope>DISRUPTION PHENOTYPE</scope>
</reference>
<reference key="5">
    <citation type="journal article" date="2000" name="J. Mol. Neurosci.">
        <title>The ortholog of human ataxin-2 is essential for early embryonic patterning in C. elegans.</title>
        <authorList>
            <person name="Kiehl T.R."/>
            <person name="Shibata H."/>
            <person name="Pulst S.M."/>
        </authorList>
    </citation>
    <scope>DISRUPTION PHENOTYPE</scope>
</reference>
<reference key="6">
    <citation type="journal article" date="2005" name="Dev. Cell">
        <title>The T-box transcription factor SEA-1 is an autosomal element of the X:A signal that determines C. elegans sex.</title>
        <authorList>
            <person name="Powell J.R."/>
            <person name="Jow M.M."/>
            <person name="Meyer B.J."/>
        </authorList>
    </citation>
    <scope>FUNCTION</scope>
    <scope>DISRUPTION PHENOTYPE</scope>
</reference>
<reference key="7">
    <citation type="journal article" date="2006" name="Nat. Methods">
        <title>Transgenic alternative-splicing reporters reveal tissue-specific expression profiles and regulation mechanisms in vivo.</title>
        <authorList>
            <person name="Kuroyanagi H."/>
            <person name="Kobayashi T."/>
            <person name="Mitani S."/>
            <person name="Hagiwara M."/>
        </authorList>
    </citation>
    <scope>FUNCTION</scope>
</reference>
<reference key="8">
    <citation type="journal article" date="2007" name="Genetics">
        <title>A ONECUT homeodomain protein communicates X chromosome dose to specify Caenorhabditis elegans sexual fate by repressing a sex switch gene.</title>
        <authorList>
            <person name="Gladden J.M."/>
            <person name="Meyer B.J."/>
        </authorList>
    </citation>
    <scope>FUNCTION</scope>
    <scope>DISRUPTION PHENOTYPE</scope>
</reference>
<reference key="9">
    <citation type="journal article" date="2007" name="Mol. Cell. Biol.">
        <title>The Fox-1 family and SUP-12 coordinately regulate tissue-specific alternative splicing in vivo.</title>
        <authorList>
            <person name="Kuroyanagi H."/>
            <person name="Ohno G."/>
            <person name="Mitani S."/>
            <person name="Hagiwara M."/>
        </authorList>
    </citation>
    <scope>FUNCTION</scope>
    <scope>INTERACTION WITH SUP-12</scope>
    <scope>TISSUE SPECIFICITY</scope>
    <scope>DEVELOPMENTAL STAGE</scope>
</reference>
<reference key="10">
    <citation type="journal article" date="2011" name="Development">
        <title>The zinc-finger protein SEA-2 regulates larval developmental timing and adult lifespan in C. elegans.</title>
        <authorList>
            <person name="Huang X."/>
            <person name="Zhang H."/>
            <person name="Zhang H."/>
        </authorList>
    </citation>
    <scope>FUNCTION</scope>
    <scope>DISRUPTION PHENOTYPE</scope>
</reference>
<reference key="11">
    <citation type="journal article" date="2013" name="Genes Dev.">
        <title>Molecular antagonism between X-chromosome and autosome signals determines nematode sex.</title>
        <authorList>
            <person name="Farboud B."/>
            <person name="Nix P."/>
            <person name="Jow M.M."/>
            <person name="Gladden J.M."/>
            <person name="Meyer B.J."/>
        </authorList>
    </citation>
    <scope>FUNCTION</scope>
</reference>
<reference key="12">
    <citation type="journal article" date="2013" name="PLoS Genet.">
        <title>CELF family RNA-binding protein UNC-75 regulates two sets of mutually exclusive exons of the unc-32 gene in neuron-specific manners in Caenorhabditis elegans.</title>
        <authorList>
            <person name="Kuroyanagi H."/>
            <person name="Watanabe Y."/>
            <person name="Hagiwara M."/>
        </authorList>
    </citation>
    <scope>FUNCTION</scope>
    <scope>SUBCELLULAR LOCATION</scope>
    <scope>MUTAGENESIS OF 423-LEU--TYR-429</scope>
</reference>
<reference key="13">
    <citation type="journal article" date="2020" name="Elife">
        <title>Dose-dependent action of the RNA binding protein FOX-1 to relay X-chromosome number and determine C. elegans sex.</title>
        <authorList>
            <person name="Farboud B."/>
            <person name="Novak C.S."/>
            <person name="Nicoll M."/>
            <person name="Quiogue A."/>
            <person name="Meyer B.J."/>
        </authorList>
    </citation>
    <scope>FUNCTION</scope>
    <scope>SUBCELLULAR LOCATION</scope>
    <scope>DISRUPTION PHENOTYPE</scope>
</reference>
<dbReference type="EMBL" id="U14946">
    <property type="protein sequence ID" value="AAA67723.1"/>
    <property type="molecule type" value="mRNA"/>
</dbReference>
<dbReference type="EMBL" id="BX284606">
    <property type="protein sequence ID" value="CCD67194.1"/>
    <property type="molecule type" value="Genomic_DNA"/>
</dbReference>
<dbReference type="EMBL" id="BX284606">
    <property type="protein sequence ID" value="SAP35625.1"/>
    <property type="molecule type" value="Genomic_DNA"/>
</dbReference>
<dbReference type="EMBL" id="BX284606">
    <property type="protein sequence ID" value="SAP35629.1"/>
    <property type="molecule type" value="Genomic_DNA"/>
</dbReference>
<dbReference type="PIR" id="T16825">
    <property type="entry name" value="T16825"/>
</dbReference>
<dbReference type="RefSeq" id="NP_001317738.1">
    <molecule id="Q10572-2"/>
    <property type="nucleotide sequence ID" value="NM_001330895.6"/>
</dbReference>
<dbReference type="RefSeq" id="NP_001317857.1">
    <molecule id="Q10572-1"/>
    <property type="nucleotide sequence ID" value="NM_001330894.3"/>
</dbReference>
<dbReference type="RefSeq" id="NP_001317861.1">
    <molecule id="Q10572-3"/>
    <property type="nucleotide sequence ID" value="NM_001330896.3"/>
</dbReference>
<dbReference type="BioGRID" id="45493">
    <property type="interactions" value="6"/>
</dbReference>
<dbReference type="FunCoup" id="Q10572">
    <property type="interactions" value="100"/>
</dbReference>
<dbReference type="IntAct" id="Q10572">
    <property type="interactions" value="2"/>
</dbReference>
<dbReference type="STRING" id="6239.T07D1.4d.1"/>
<dbReference type="PaxDb" id="6239-T07D1.4"/>
<dbReference type="PeptideAtlas" id="Q10572"/>
<dbReference type="EnsemblMetazoa" id="T07D1.4a.1">
    <molecule id="Q10572-2"/>
    <property type="protein sequence ID" value="T07D1.4a.1"/>
    <property type="gene ID" value="WBGene00001484"/>
</dbReference>
<dbReference type="EnsemblMetazoa" id="T07D1.4a.2">
    <molecule id="Q10572-2"/>
    <property type="protein sequence ID" value="T07D1.4a.2"/>
    <property type="gene ID" value="WBGene00001484"/>
</dbReference>
<dbReference type="EnsemblMetazoa" id="T07D1.4a.3">
    <molecule id="Q10572-2"/>
    <property type="protein sequence ID" value="T07D1.4a.3"/>
    <property type="gene ID" value="WBGene00001484"/>
</dbReference>
<dbReference type="EnsemblMetazoa" id="T07D1.4a.4">
    <molecule id="Q10572-2"/>
    <property type="protein sequence ID" value="T07D1.4a.4"/>
    <property type="gene ID" value="WBGene00001484"/>
</dbReference>
<dbReference type="EnsemblMetazoa" id="T07D1.4b.1">
    <molecule id="Q10572-3"/>
    <property type="protein sequence ID" value="T07D1.4b.1"/>
    <property type="gene ID" value="WBGene00001484"/>
</dbReference>
<dbReference type="EnsemblMetazoa" id="T07D1.4d.1">
    <molecule id="Q10572-1"/>
    <property type="protein sequence ID" value="T07D1.4d.1"/>
    <property type="gene ID" value="WBGene00001484"/>
</dbReference>
<dbReference type="GeneID" id="180549"/>
<dbReference type="KEGG" id="cel:CELE_T07D1.4"/>
<dbReference type="UCSC" id="T07D1.4.2">
    <molecule id="Q10572-1"/>
    <property type="organism name" value="c. elegans"/>
</dbReference>
<dbReference type="AGR" id="WB:WBGene00001484"/>
<dbReference type="CTD" id="180549"/>
<dbReference type="WormBase" id="T07D1.4a">
    <molecule id="Q10572-2"/>
    <property type="protein sequence ID" value="CE51693"/>
    <property type="gene ID" value="WBGene00001484"/>
    <property type="gene designation" value="fox-1"/>
</dbReference>
<dbReference type="WormBase" id="T07D1.4b">
    <molecule id="Q10572-3"/>
    <property type="protein sequence ID" value="CE51620"/>
    <property type="gene ID" value="WBGene00001484"/>
    <property type="gene designation" value="fox-1"/>
</dbReference>
<dbReference type="WormBase" id="T07D1.4d">
    <molecule id="Q10572-1"/>
    <property type="protein sequence ID" value="CE51563"/>
    <property type="gene ID" value="WBGene00001484"/>
    <property type="gene designation" value="fox-1"/>
</dbReference>
<dbReference type="eggNOG" id="KOG0125">
    <property type="taxonomic scope" value="Eukaryota"/>
</dbReference>
<dbReference type="GeneTree" id="ENSGT00940000168999"/>
<dbReference type="HOGENOM" id="CLU_662647_0_0_1"/>
<dbReference type="InParanoid" id="Q10572"/>
<dbReference type="OrthoDB" id="5382468at2759"/>
<dbReference type="PRO" id="PR:Q10572"/>
<dbReference type="Proteomes" id="UP000001940">
    <property type="component" value="Chromosome X"/>
</dbReference>
<dbReference type="Bgee" id="WBGene00001484">
    <property type="expression patterns" value="Expressed in pharyngeal muscle cell (C elegans) and 3 other cell types or tissues"/>
</dbReference>
<dbReference type="ExpressionAtlas" id="Q10572">
    <property type="expression patterns" value="baseline and differential"/>
</dbReference>
<dbReference type="GO" id="GO:0005737">
    <property type="term" value="C:cytoplasm"/>
    <property type="evidence" value="ECO:0000318"/>
    <property type="project" value="GO_Central"/>
</dbReference>
<dbReference type="GO" id="GO:0005634">
    <property type="term" value="C:nucleus"/>
    <property type="evidence" value="ECO:0000314"/>
    <property type="project" value="WormBase"/>
</dbReference>
<dbReference type="GO" id="GO:0003729">
    <property type="term" value="F:mRNA binding"/>
    <property type="evidence" value="ECO:0000318"/>
    <property type="project" value="GO_Central"/>
</dbReference>
<dbReference type="GO" id="GO:0008143">
    <property type="term" value="F:poly(A) binding"/>
    <property type="evidence" value="ECO:0000314"/>
    <property type="project" value="WormBase"/>
</dbReference>
<dbReference type="GO" id="GO:0034046">
    <property type="term" value="F:poly(G) binding"/>
    <property type="evidence" value="ECO:0000314"/>
    <property type="project" value="WormBase"/>
</dbReference>
<dbReference type="GO" id="GO:0008266">
    <property type="term" value="F:poly(U) RNA binding"/>
    <property type="evidence" value="ECO:0000314"/>
    <property type="project" value="WormBase"/>
</dbReference>
<dbReference type="GO" id="GO:0097157">
    <property type="term" value="F:pre-mRNA intronic binding"/>
    <property type="evidence" value="ECO:0000314"/>
    <property type="project" value="UniProtKB"/>
</dbReference>
<dbReference type="GO" id="GO:0030154">
    <property type="term" value="P:cell differentiation"/>
    <property type="evidence" value="ECO:0007669"/>
    <property type="project" value="UniProtKB-KW"/>
</dbReference>
<dbReference type="GO" id="GO:0042464">
    <property type="term" value="P:dosage compensation by hypoactivation of X chromosome"/>
    <property type="evidence" value="ECO:0000315"/>
    <property type="project" value="UniProtKB"/>
</dbReference>
<dbReference type="GO" id="GO:0007617">
    <property type="term" value="P:mating behavior"/>
    <property type="evidence" value="ECO:0000315"/>
    <property type="project" value="WormBase"/>
</dbReference>
<dbReference type="GO" id="GO:0000366">
    <property type="term" value="P:mRNA alternative trans-splicing"/>
    <property type="evidence" value="ECO:0000314"/>
    <property type="project" value="UniProtKB"/>
</dbReference>
<dbReference type="GO" id="GO:0016071">
    <property type="term" value="P:mRNA metabolic process"/>
    <property type="evidence" value="ECO:0000315"/>
    <property type="project" value="WormBase"/>
</dbReference>
<dbReference type="GO" id="GO:0010629">
    <property type="term" value="P:negative regulation of gene expression"/>
    <property type="evidence" value="ECO:0000315"/>
    <property type="project" value="UniProtKB"/>
</dbReference>
<dbReference type="GO" id="GO:0007399">
    <property type="term" value="P:nervous system development"/>
    <property type="evidence" value="ECO:0000318"/>
    <property type="project" value="GO_Central"/>
</dbReference>
<dbReference type="GO" id="GO:0007538">
    <property type="term" value="P:primary sex determination"/>
    <property type="evidence" value="ECO:0000315"/>
    <property type="project" value="UniProtKB"/>
</dbReference>
<dbReference type="GO" id="GO:0000381">
    <property type="term" value="P:regulation of alternative mRNA splicing, via spliceosome"/>
    <property type="evidence" value="ECO:0000315"/>
    <property type="project" value="UniProtKB"/>
</dbReference>
<dbReference type="GO" id="GO:0010468">
    <property type="term" value="P:regulation of gene expression"/>
    <property type="evidence" value="ECO:0000315"/>
    <property type="project" value="UniProtKB"/>
</dbReference>
<dbReference type="GO" id="GO:0007548">
    <property type="term" value="P:sex differentiation"/>
    <property type="evidence" value="ECO:0007669"/>
    <property type="project" value="UniProtKB-KW"/>
</dbReference>
<dbReference type="CDD" id="cd12407">
    <property type="entry name" value="RRM_FOX1_like"/>
    <property type="match status" value="1"/>
</dbReference>
<dbReference type="FunFam" id="3.30.70.330:FF:000821">
    <property type="entry name" value="Sex determination protein fox-1"/>
    <property type="match status" value="1"/>
</dbReference>
<dbReference type="Gene3D" id="3.30.70.330">
    <property type="match status" value="1"/>
</dbReference>
<dbReference type="InterPro" id="IPR034237">
    <property type="entry name" value="FOX1_RRM"/>
</dbReference>
<dbReference type="InterPro" id="IPR012677">
    <property type="entry name" value="Nucleotide-bd_a/b_plait_sf"/>
</dbReference>
<dbReference type="InterPro" id="IPR035979">
    <property type="entry name" value="RBD_domain_sf"/>
</dbReference>
<dbReference type="InterPro" id="IPR047131">
    <property type="entry name" value="RBFOX1-like"/>
</dbReference>
<dbReference type="InterPro" id="IPR000504">
    <property type="entry name" value="RRM_dom"/>
</dbReference>
<dbReference type="PANTHER" id="PTHR15597">
    <property type="entry name" value="ATAXIN 2-BINDING PROTEIN 1-RELATED"/>
    <property type="match status" value="1"/>
</dbReference>
<dbReference type="PANTHER" id="PTHR15597:SF22">
    <property type="entry name" value="RNA-BINDING FOX PROTEIN 1, ISOFORM H"/>
    <property type="match status" value="1"/>
</dbReference>
<dbReference type="Pfam" id="PF00076">
    <property type="entry name" value="RRM_1"/>
    <property type="match status" value="1"/>
</dbReference>
<dbReference type="SMART" id="SM00360">
    <property type="entry name" value="RRM"/>
    <property type="match status" value="1"/>
</dbReference>
<dbReference type="SUPFAM" id="SSF54928">
    <property type="entry name" value="RNA-binding domain, RBD"/>
    <property type="match status" value="1"/>
</dbReference>
<dbReference type="PROSITE" id="PS50102">
    <property type="entry name" value="RRM"/>
    <property type="match status" value="1"/>
</dbReference>
<name>FOX1_CAEEL</name>
<accession>Q10572</accession>
<accession>A0A168HBS9</accession>
<accession>A0A168HBX9</accession>
<accession>Q22304</accession>
<evidence type="ECO:0000255" key="1">
    <source>
        <dbReference type="PROSITE-ProRule" id="PRU00176"/>
    </source>
</evidence>
<evidence type="ECO:0000256" key="2">
    <source>
        <dbReference type="SAM" id="MobiDB-lite"/>
    </source>
</evidence>
<evidence type="ECO:0000269" key="3">
    <source>
    </source>
</evidence>
<evidence type="ECO:0000269" key="4">
    <source>
    </source>
</evidence>
<evidence type="ECO:0000269" key="5">
    <source>
    </source>
</evidence>
<evidence type="ECO:0000269" key="6">
    <source>
    </source>
</evidence>
<evidence type="ECO:0000269" key="7">
    <source>
    </source>
</evidence>
<evidence type="ECO:0000269" key="8">
    <source>
    </source>
</evidence>
<evidence type="ECO:0000269" key="9">
    <source>
    </source>
</evidence>
<evidence type="ECO:0000269" key="10">
    <source>
    </source>
</evidence>
<evidence type="ECO:0000269" key="11">
    <source>
    </source>
</evidence>
<evidence type="ECO:0000269" key="12">
    <source>
    </source>
</evidence>
<evidence type="ECO:0000269" key="13">
    <source>
    </source>
</evidence>
<evidence type="ECO:0000269" key="14">
    <source>
    </source>
</evidence>
<evidence type="ECO:0000305" key="15"/>
<evidence type="ECO:0000305" key="16">
    <source>
    </source>
</evidence>
<evidence type="ECO:0000312" key="17">
    <source>
        <dbReference type="WormBase" id="T07D1.4a"/>
    </source>
</evidence>
<evidence type="ECO:0000312" key="18">
    <source>
        <dbReference type="WormBase" id="T07D1.4b"/>
    </source>
</evidence>
<evidence type="ECO:0000312" key="19">
    <source>
        <dbReference type="WormBase" id="T07D1.4d"/>
    </source>
</evidence>
<comment type="function">
    <text evidence="4 5 6 7 8 9 10 11 12 13 14">RNA-binding protein that regulates tissue-specific alternative splicing events by binding to 5'-UGCAUG-3' and 5'-GCACG-3' elements (PubMed:17060915, PubMed:17923701, PubMed:23468662, PubMed:33372658). Also binds to poly(A), poly(G), poly(C), or poly(U) stretches of RNA (PubMed:9927456). Plays a role in the sex determination pathway and X chromosome dosage compensation, and together with sex-1 is involved in making the distinction between one and two X-chromosomes (PubMed:16139225, PubMed:17720939, PubMed:21471153, PubMed:23666922, PubMed:33372658, PubMed:7821230, PubMed:9217163, PubMed:9927456). Binds to 5'-GCAUG-3' and 5'-GCACG-3' elements in intron 6 of the pre-mRNA of the sex-determining factor xol-1 to promote its alternative splicing and together with sex-1 negatively regulates the expression of xol-1 to promote hermaphrodite development (PubMed:33372658, PubMed:9217163). Negatively regulates the expression of the active isoform of xol-1 (isoform b) by promoting intron 6 retention and the deletion of exon 7 coding sequences in hermaphrodite embryos (PubMed:33372658). Furthermore, binding to the pre-mRNA of xol-1 can also direct the use of an alternative 3' splice site enabling the xol-1 transcript to be trans-spliced to unrelated genes on chromosome 2, which also leads to xol-1 exon 7 deletion (PubMed:33372658). Does not seem to regulate the retention of introns 1 to 5 of xol-1 pre-mRNA (PubMed:33372658). Plays a role in the association of the dosage compensation complex proteins dpy-27 and sdc-3 with the hermaphrodite X chromosomes (PubMed:16139225, PubMed:17720939). Binds to 5'-UGCAUG-3' elements in intron 7 of the pre-mRNA of unc-32 to promote its alternative splicing in neuronal tissues (PubMed:23468662). Binds to 5'-UGCAUG-3' elements in intron 4 of the pre-mRNA of egl-15 to promote its alternative splicing in body wall muscle tissues (PubMed:17060915). Promotes binding of RNA-binding protein sup-12 to target RNA (PubMed:17923701). Plays a role in male mating behavior (PubMed:9927456).</text>
</comment>
<comment type="subunit">
    <text evidence="7">Interacts with sup-12.</text>
</comment>
<comment type="subcellular location">
    <subcellularLocation>
        <location evidence="9 13 16">Nucleus</location>
    </subcellularLocation>
</comment>
<comment type="alternative products">
    <event type="alternative splicing"/>
    <isoform>
        <id>Q10572-1</id>
        <name evidence="19">d</name>
        <sequence type="displayed"/>
    </isoform>
    <isoform>
        <id>Q10572-2</id>
        <name evidence="17">a</name>
        <sequence type="described" ref="VSP_060630"/>
    </isoform>
    <isoform>
        <id>Q10572-3</id>
        <name evidence="18">b</name>
        <sequence type="described" ref="VSP_060629"/>
    </isoform>
</comment>
<comment type="tissue specificity">
    <text evidence="7 14">In males and hermaphrodites expressed in a subset of cells in the head and tail (PubMed:9927456). Expressed in the pharynx, intestine and in muscles from the vulva and body wall.</text>
</comment>
<comment type="developmental stage">
    <text evidence="7 13 14">Expressed in males and hermaphrodites throughout development (PubMed:17923701, PubMed:9927456). Expressed in early embryos before morphogenesis (PubMed:17923701). In hermaphrodite embryos, first expressed at the 8-16 cell stage of development with expression peaking by the 100-cell stage (PubMed:9217163). Not expressed at the 550-cell stage of embryogenesis (PubMed:9217163).</text>
</comment>
<comment type="disruption phenotype">
    <text evidence="3 4 6 8 11 13">Males and hermaphrodites are viable and there is no change in brood size (PubMed:17720939, PubMed:33372658, PubMed:9217163). In a sex-1(y263) mutant background or a sex-1 RNAi mutant background, males are viable, but hermaphrodites have highly reduced viability due to failure of the dosage compensation complex to assemble on X chromosomes, and the surviving animals show a reduction in brood size (PubMed:16139225, PubMed:17720939, PubMed:33372658). RNAi-mediated knockdown results in a 63% reduction in the number of eggs produced (PubMed:11303786). RNAi-mediated knockdown together with sex-1 results in hermaphrodite embryonic lethality (PubMed:21471153). This hermaphrodite-specific lethality is suppressed in a sea-2 bp283 mutant or sea-1 gk799 mutant background (PubMed:21471153).</text>
</comment>
<sequence length="429" mass="45515">MAELIEEVSTATHASLNACDPIVVNSEALPMQALYQLSATGAQQQNQQIPIGLSNSLLYQQLAAHQQIAAQQHQQQLAVSAAHQTQNNIMLATSAPSLINHMENSTDGKVKDDPNSDYDLQLSIQQQLAAAAQAAQMGQTQIGPQIVGQQGQPVVATTAGSTNGSAAVTQPDPSTSSGPDGPKRLHVSNIPFRFRDPDLKTMFEKFGVVSDVEIIFNERGSKGFGFVTMERPQDAERARQELHGSMIEGRKIEVNCATARVHSKKVKPTGGILDQMNPLMAQSALAAQAQMNRALLLRSPLVAQSLLGRGAALIPGMQQPAFQLQAALAGNPLAQLQGQPLLFNAAALQTNALQQSAFGMDPAAVQAALLANEQARFQLAAAAAQGRIPSSGNASAFGEQYLSNALATASLPSYQMNPALRTLNRFTPY</sequence>
<feature type="chain" id="PRO_0000081589" description="Sex determination protein fox-1">
    <location>
        <begin position="1"/>
        <end position="429"/>
    </location>
</feature>
<feature type="domain" description="RRM" evidence="1">
    <location>
        <begin position="183"/>
        <end position="259"/>
    </location>
</feature>
<feature type="region of interest" description="Disordered" evidence="2">
    <location>
        <begin position="156"/>
        <end position="188"/>
    </location>
</feature>
<feature type="compositionally biased region" description="Low complexity" evidence="2">
    <location>
        <begin position="156"/>
        <end position="180"/>
    </location>
</feature>
<feature type="splice variant" id="VSP_060629" description="In isoform b." evidence="15">
    <location>
        <begin position="1"/>
        <end position="89"/>
    </location>
</feature>
<feature type="splice variant" id="VSP_060630" description="In isoform a." evidence="15">
    <location>
        <begin position="1"/>
        <end position="30"/>
    </location>
</feature>
<feature type="mutagenesis site" description="Disrupts nuclear localization." evidence="9">
    <location>
        <begin position="423"/>
        <end position="429"/>
    </location>
</feature>
<feature type="sequence conflict" description="In Ref. 1; AAA67723." evidence="15" ref="1">
    <original>Q</original>
    <variation>R</variation>
    <location>
        <position position="127"/>
    </location>
</feature>
<feature type="sequence conflict" description="In Ref. 1; AAA67723." evidence="15" ref="1">
    <original>A</original>
    <variation>P</variation>
    <location>
        <position position="311"/>
    </location>
</feature>
<feature type="sequence conflict" description="In Ref. 1; AAA67723." evidence="15" ref="1">
    <original>Q</original>
    <variation>L</variation>
    <location>
        <position position="366"/>
    </location>
</feature>
<proteinExistence type="evidence at protein level"/>
<protein>
    <recommendedName>
        <fullName>Sex determination protein fox-1</fullName>
    </recommendedName>
    <alternativeName>
        <fullName>Feminizing locus on X protein 1</fullName>
    </alternativeName>
</protein>